<sequence length="122" mass="13897">MARIAGVNIPTNKRVLIALQYIHGIGQKNAAEILEKVKIADDKRVNQLSDQEVLQIREVIDRDYMVEGDLRRETGMNIKRLMDLGCYRGLRHRRGLPVRGQRTHTNARTRKGPAKSIAGKKK</sequence>
<organism>
    <name type="scientific">Rhodopseudomonas palustris (strain BisB18)</name>
    <dbReference type="NCBI Taxonomy" id="316056"/>
    <lineage>
        <taxon>Bacteria</taxon>
        <taxon>Pseudomonadati</taxon>
        <taxon>Pseudomonadota</taxon>
        <taxon>Alphaproteobacteria</taxon>
        <taxon>Hyphomicrobiales</taxon>
        <taxon>Nitrobacteraceae</taxon>
        <taxon>Rhodopseudomonas</taxon>
    </lineage>
</organism>
<feature type="chain" id="PRO_0000306693" description="Small ribosomal subunit protein uS13">
    <location>
        <begin position="1"/>
        <end position="122"/>
    </location>
</feature>
<feature type="region of interest" description="Disordered" evidence="2">
    <location>
        <begin position="95"/>
        <end position="122"/>
    </location>
</feature>
<keyword id="KW-0687">Ribonucleoprotein</keyword>
<keyword id="KW-0689">Ribosomal protein</keyword>
<keyword id="KW-0694">RNA-binding</keyword>
<keyword id="KW-0699">rRNA-binding</keyword>
<keyword id="KW-0820">tRNA-binding</keyword>
<name>RS13_RHOPB</name>
<dbReference type="EMBL" id="CP000301">
    <property type="protein sequence ID" value="ABD88966.1"/>
    <property type="status" value="ALT_INIT"/>
    <property type="molecule type" value="Genomic_DNA"/>
</dbReference>
<dbReference type="SMR" id="Q211H0"/>
<dbReference type="STRING" id="316056.RPC_3426"/>
<dbReference type="KEGG" id="rpc:RPC_3426"/>
<dbReference type="eggNOG" id="COG0099">
    <property type="taxonomic scope" value="Bacteria"/>
</dbReference>
<dbReference type="HOGENOM" id="CLU_103849_1_2_5"/>
<dbReference type="OrthoDB" id="9803610at2"/>
<dbReference type="GO" id="GO:0005829">
    <property type="term" value="C:cytosol"/>
    <property type="evidence" value="ECO:0007669"/>
    <property type="project" value="TreeGrafter"/>
</dbReference>
<dbReference type="GO" id="GO:0015935">
    <property type="term" value="C:small ribosomal subunit"/>
    <property type="evidence" value="ECO:0007669"/>
    <property type="project" value="TreeGrafter"/>
</dbReference>
<dbReference type="GO" id="GO:0019843">
    <property type="term" value="F:rRNA binding"/>
    <property type="evidence" value="ECO:0007669"/>
    <property type="project" value="UniProtKB-UniRule"/>
</dbReference>
<dbReference type="GO" id="GO:0003735">
    <property type="term" value="F:structural constituent of ribosome"/>
    <property type="evidence" value="ECO:0007669"/>
    <property type="project" value="InterPro"/>
</dbReference>
<dbReference type="GO" id="GO:0000049">
    <property type="term" value="F:tRNA binding"/>
    <property type="evidence" value="ECO:0007669"/>
    <property type="project" value="UniProtKB-UniRule"/>
</dbReference>
<dbReference type="GO" id="GO:0006412">
    <property type="term" value="P:translation"/>
    <property type="evidence" value="ECO:0007669"/>
    <property type="project" value="UniProtKB-UniRule"/>
</dbReference>
<dbReference type="FunFam" id="1.10.8.50:FF:000001">
    <property type="entry name" value="30S ribosomal protein S13"/>
    <property type="match status" value="1"/>
</dbReference>
<dbReference type="FunFam" id="4.10.910.10:FF:000001">
    <property type="entry name" value="30S ribosomal protein S13"/>
    <property type="match status" value="1"/>
</dbReference>
<dbReference type="Gene3D" id="1.10.8.50">
    <property type="match status" value="1"/>
</dbReference>
<dbReference type="Gene3D" id="4.10.910.10">
    <property type="entry name" value="30s ribosomal protein s13, domain 2"/>
    <property type="match status" value="1"/>
</dbReference>
<dbReference type="HAMAP" id="MF_01315">
    <property type="entry name" value="Ribosomal_uS13"/>
    <property type="match status" value="1"/>
</dbReference>
<dbReference type="InterPro" id="IPR027437">
    <property type="entry name" value="Rbsml_uS13_C"/>
</dbReference>
<dbReference type="InterPro" id="IPR001892">
    <property type="entry name" value="Ribosomal_uS13"/>
</dbReference>
<dbReference type="InterPro" id="IPR010979">
    <property type="entry name" value="Ribosomal_uS13-like_H2TH"/>
</dbReference>
<dbReference type="InterPro" id="IPR019980">
    <property type="entry name" value="Ribosomal_uS13_bac-type"/>
</dbReference>
<dbReference type="InterPro" id="IPR018269">
    <property type="entry name" value="Ribosomal_uS13_CS"/>
</dbReference>
<dbReference type="NCBIfam" id="TIGR03631">
    <property type="entry name" value="uS13_bact"/>
    <property type="match status" value="1"/>
</dbReference>
<dbReference type="PANTHER" id="PTHR10871">
    <property type="entry name" value="30S RIBOSOMAL PROTEIN S13/40S RIBOSOMAL PROTEIN S18"/>
    <property type="match status" value="1"/>
</dbReference>
<dbReference type="PANTHER" id="PTHR10871:SF1">
    <property type="entry name" value="SMALL RIBOSOMAL SUBUNIT PROTEIN US13M"/>
    <property type="match status" value="1"/>
</dbReference>
<dbReference type="Pfam" id="PF00416">
    <property type="entry name" value="Ribosomal_S13"/>
    <property type="match status" value="1"/>
</dbReference>
<dbReference type="PIRSF" id="PIRSF002134">
    <property type="entry name" value="Ribosomal_S13"/>
    <property type="match status" value="1"/>
</dbReference>
<dbReference type="SUPFAM" id="SSF46946">
    <property type="entry name" value="S13-like H2TH domain"/>
    <property type="match status" value="1"/>
</dbReference>
<dbReference type="PROSITE" id="PS00646">
    <property type="entry name" value="RIBOSOMAL_S13_1"/>
    <property type="match status" value="1"/>
</dbReference>
<dbReference type="PROSITE" id="PS50159">
    <property type="entry name" value="RIBOSOMAL_S13_2"/>
    <property type="match status" value="1"/>
</dbReference>
<accession>Q211H0</accession>
<evidence type="ECO:0000255" key="1">
    <source>
        <dbReference type="HAMAP-Rule" id="MF_01315"/>
    </source>
</evidence>
<evidence type="ECO:0000256" key="2">
    <source>
        <dbReference type="SAM" id="MobiDB-lite"/>
    </source>
</evidence>
<evidence type="ECO:0000305" key="3"/>
<gene>
    <name evidence="1" type="primary">rpsM</name>
    <name type="ordered locus">RPC_3426</name>
</gene>
<protein>
    <recommendedName>
        <fullName evidence="1">Small ribosomal subunit protein uS13</fullName>
    </recommendedName>
    <alternativeName>
        <fullName evidence="3">30S ribosomal protein S13</fullName>
    </alternativeName>
</protein>
<reference key="1">
    <citation type="submission" date="2006-03" db="EMBL/GenBank/DDBJ databases">
        <title>Complete sequence of Rhodopseudomonas palustris BisB18.</title>
        <authorList>
            <consortium name="US DOE Joint Genome Institute"/>
            <person name="Copeland A."/>
            <person name="Lucas S."/>
            <person name="Lapidus A."/>
            <person name="Barry K."/>
            <person name="Detter J.C."/>
            <person name="Glavina del Rio T."/>
            <person name="Hammon N."/>
            <person name="Israni S."/>
            <person name="Dalin E."/>
            <person name="Tice H."/>
            <person name="Pitluck S."/>
            <person name="Chain P."/>
            <person name="Malfatti S."/>
            <person name="Shin M."/>
            <person name="Vergez L."/>
            <person name="Schmutz J."/>
            <person name="Larimer F."/>
            <person name="Land M."/>
            <person name="Hauser L."/>
            <person name="Pelletier D.A."/>
            <person name="Kyrpides N."/>
            <person name="Anderson I."/>
            <person name="Oda Y."/>
            <person name="Harwood C.S."/>
            <person name="Richardson P."/>
        </authorList>
    </citation>
    <scope>NUCLEOTIDE SEQUENCE [LARGE SCALE GENOMIC DNA]</scope>
    <source>
        <strain>BisB18</strain>
    </source>
</reference>
<comment type="function">
    <text evidence="1">Located at the top of the head of the 30S subunit, it contacts several helices of the 16S rRNA. In the 70S ribosome it contacts the 23S rRNA (bridge B1a) and protein L5 of the 50S subunit (bridge B1b), connecting the 2 subunits; these bridges are implicated in subunit movement. Contacts the tRNAs in the A and P-sites.</text>
</comment>
<comment type="subunit">
    <text evidence="1">Part of the 30S ribosomal subunit. Forms a loose heterodimer with protein S19. Forms two bridges to the 50S subunit in the 70S ribosome.</text>
</comment>
<comment type="similarity">
    <text evidence="1">Belongs to the universal ribosomal protein uS13 family.</text>
</comment>
<comment type="sequence caution" evidence="3">
    <conflict type="erroneous initiation">
        <sequence resource="EMBL-CDS" id="ABD88966"/>
    </conflict>
</comment>
<proteinExistence type="inferred from homology"/>